<comment type="function">
    <text evidence="1">Involved in translocation of long-chain fatty acids across the outer membrane. FadL may form a specific channel (By similarity).</text>
</comment>
<comment type="subcellular location">
    <subcellularLocation>
        <location evidence="1">Cell outer membrane</location>
        <topology evidence="1">Multi-pass membrane protein</topology>
    </subcellularLocation>
</comment>
<comment type="similarity">
    <text evidence="2">Belongs to the OmpP1/FadL family.</text>
</comment>
<comment type="sequence caution" evidence="2">
    <conflict type="erroneous initiation">
        <sequence resource="EMBL-CDS" id="AAG57472"/>
    </conflict>
    <text>Extended N-terminus.</text>
</comment>
<name>FADL_ECO57</name>
<sequence>MSQKTLFTKSALAVAVALISTQAWSAGFQLNEFSSSGLGRAYSGEGAIADDAGNVSRNPALITMFDRPTFSAGAVYIDPDVNISGTSPSGRSLKADNIAPTAWVPNMHFVAPINDQFGWGASITSNYGLATEFNDTYAGGSVGGTTDLETMNLNLSGAYRLNNAWSFGLGFNAVYARAKIERFAGDLGQLVAGQIMQSPAGKTPQGQALAATANGIDSNTKIAHLNGNQWGFGWNAGILYELDKNNRYALTYRSEVKIDFKGNYSSDLNRVFNNYGLPIPTATGGATQSGYLTLNLPEMWEVSGYNRVDPQWAIHYSLAYTSWSQFQQLKATSTSGDTLFQKHEGFKDAYRIALGTTYYYDDNWTFRTGIAFDDSPVPAQNRSISIPDQDRFWLSAGTTYAFNKDASVDVGVSYMHGQSVKINEGPYQFESEGKAWLFGTNFNYAF</sequence>
<proteinExistence type="inferred from homology"/>
<organism>
    <name type="scientific">Escherichia coli O157:H7</name>
    <dbReference type="NCBI Taxonomy" id="83334"/>
    <lineage>
        <taxon>Bacteria</taxon>
        <taxon>Pseudomonadati</taxon>
        <taxon>Pseudomonadota</taxon>
        <taxon>Gammaproteobacteria</taxon>
        <taxon>Enterobacterales</taxon>
        <taxon>Enterobacteriaceae</taxon>
        <taxon>Escherichia</taxon>
    </lineage>
</organism>
<feature type="signal peptide" evidence="1">
    <location>
        <begin position="1"/>
        <end position="25"/>
    </location>
</feature>
<feature type="chain" id="PRO_0000025204" description="Long-chain fatty acid transport protein">
    <location>
        <begin position="26"/>
        <end position="446"/>
    </location>
</feature>
<dbReference type="EMBL" id="AE005174">
    <property type="protein sequence ID" value="AAG57472.1"/>
    <property type="status" value="ALT_INIT"/>
    <property type="molecule type" value="Genomic_DNA"/>
</dbReference>
<dbReference type="EMBL" id="BA000007">
    <property type="protein sequence ID" value="BAB36650.2"/>
    <property type="molecule type" value="Genomic_DNA"/>
</dbReference>
<dbReference type="PIR" id="C91032">
    <property type="entry name" value="C91032"/>
</dbReference>
<dbReference type="PIR" id="D85876">
    <property type="entry name" value="D85876"/>
</dbReference>
<dbReference type="RefSeq" id="NP_311254.2">
    <property type="nucleotide sequence ID" value="NC_002695.1"/>
</dbReference>
<dbReference type="RefSeq" id="WP_001301981.1">
    <property type="nucleotide sequence ID" value="NZ_VOAI01000001.1"/>
</dbReference>
<dbReference type="SMR" id="Q8XCN6"/>
<dbReference type="STRING" id="155864.Z3608"/>
<dbReference type="GeneID" id="915676"/>
<dbReference type="KEGG" id="ece:Z3608"/>
<dbReference type="KEGG" id="ecs:ECs_3227"/>
<dbReference type="PATRIC" id="fig|386585.9.peg.3369"/>
<dbReference type="eggNOG" id="COG2067">
    <property type="taxonomic scope" value="Bacteria"/>
</dbReference>
<dbReference type="HOGENOM" id="CLU_035981_0_0_6"/>
<dbReference type="OMA" id="WDDSWLF"/>
<dbReference type="Proteomes" id="UP000000558">
    <property type="component" value="Chromosome"/>
</dbReference>
<dbReference type="Proteomes" id="UP000002519">
    <property type="component" value="Chromosome"/>
</dbReference>
<dbReference type="GO" id="GO:0009279">
    <property type="term" value="C:cell outer membrane"/>
    <property type="evidence" value="ECO:0007669"/>
    <property type="project" value="UniProtKB-SubCell"/>
</dbReference>
<dbReference type="GO" id="GO:0015483">
    <property type="term" value="F:long-chain fatty acid transporting porin activity"/>
    <property type="evidence" value="ECO:0007669"/>
    <property type="project" value="TreeGrafter"/>
</dbReference>
<dbReference type="FunFam" id="2.40.160.60:FF:000001">
    <property type="entry name" value="Long-chain fatty acid transporter FadL"/>
    <property type="match status" value="1"/>
</dbReference>
<dbReference type="Gene3D" id="2.40.160.60">
    <property type="entry name" value="Outer membrane protein transport protein (OMPP1/FadL/TodX)"/>
    <property type="match status" value="1"/>
</dbReference>
<dbReference type="InterPro" id="IPR005017">
    <property type="entry name" value="OMPP1/FadL/TodX"/>
</dbReference>
<dbReference type="NCBIfam" id="NF007988">
    <property type="entry name" value="PRK10716.1"/>
    <property type="match status" value="1"/>
</dbReference>
<dbReference type="PANTHER" id="PTHR35093:SF3">
    <property type="entry name" value="LONG-CHAIN FATTY ACID TRANSPORT PROTEIN"/>
    <property type="match status" value="1"/>
</dbReference>
<dbReference type="PANTHER" id="PTHR35093">
    <property type="entry name" value="OUTER MEMBRANE PROTEIN NMB0088-RELATED"/>
    <property type="match status" value="1"/>
</dbReference>
<dbReference type="Pfam" id="PF03349">
    <property type="entry name" value="Toluene_X"/>
    <property type="match status" value="1"/>
</dbReference>
<dbReference type="SUPFAM" id="SSF56935">
    <property type="entry name" value="Porins"/>
    <property type="match status" value="1"/>
</dbReference>
<keyword id="KW-0998">Cell outer membrane</keyword>
<keyword id="KW-0445">Lipid transport</keyword>
<keyword id="KW-0472">Membrane</keyword>
<keyword id="KW-1185">Reference proteome</keyword>
<keyword id="KW-0732">Signal</keyword>
<keyword id="KW-0812">Transmembrane</keyword>
<keyword id="KW-1134">Transmembrane beta strand</keyword>
<keyword id="KW-0813">Transport</keyword>
<protein>
    <recommendedName>
        <fullName>Long-chain fatty acid transport protein</fullName>
    </recommendedName>
    <alternativeName>
        <fullName>Outer membrane FadL protein</fullName>
    </alternativeName>
    <alternativeName>
        <fullName>Outer membrane flp protein</fullName>
    </alternativeName>
</protein>
<gene>
    <name type="primary">fadL</name>
    <name type="ordered locus">Z3608</name>
    <name type="ordered locus">ECs3227</name>
</gene>
<evidence type="ECO:0000250" key="1"/>
<evidence type="ECO:0000305" key="2"/>
<accession>Q8XCN6</accession>
<reference key="1">
    <citation type="journal article" date="2001" name="Nature">
        <title>Genome sequence of enterohaemorrhagic Escherichia coli O157:H7.</title>
        <authorList>
            <person name="Perna N.T."/>
            <person name="Plunkett G. III"/>
            <person name="Burland V."/>
            <person name="Mau B."/>
            <person name="Glasner J.D."/>
            <person name="Rose D.J."/>
            <person name="Mayhew G.F."/>
            <person name="Evans P.S."/>
            <person name="Gregor J."/>
            <person name="Kirkpatrick H.A."/>
            <person name="Posfai G."/>
            <person name="Hackett J."/>
            <person name="Klink S."/>
            <person name="Boutin A."/>
            <person name="Shao Y."/>
            <person name="Miller L."/>
            <person name="Grotbeck E.J."/>
            <person name="Davis N.W."/>
            <person name="Lim A."/>
            <person name="Dimalanta E.T."/>
            <person name="Potamousis K."/>
            <person name="Apodaca J."/>
            <person name="Anantharaman T.S."/>
            <person name="Lin J."/>
            <person name="Yen G."/>
            <person name="Schwartz D.C."/>
            <person name="Welch R.A."/>
            <person name="Blattner F.R."/>
        </authorList>
    </citation>
    <scope>NUCLEOTIDE SEQUENCE [LARGE SCALE GENOMIC DNA]</scope>
    <source>
        <strain>O157:H7 / EDL933 / ATCC 700927 / EHEC</strain>
    </source>
</reference>
<reference key="2">
    <citation type="journal article" date="2001" name="DNA Res.">
        <title>Complete genome sequence of enterohemorrhagic Escherichia coli O157:H7 and genomic comparison with a laboratory strain K-12.</title>
        <authorList>
            <person name="Hayashi T."/>
            <person name="Makino K."/>
            <person name="Ohnishi M."/>
            <person name="Kurokawa K."/>
            <person name="Ishii K."/>
            <person name="Yokoyama K."/>
            <person name="Han C.-G."/>
            <person name="Ohtsubo E."/>
            <person name="Nakayama K."/>
            <person name="Murata T."/>
            <person name="Tanaka M."/>
            <person name="Tobe T."/>
            <person name="Iida T."/>
            <person name="Takami H."/>
            <person name="Honda T."/>
            <person name="Sasakawa C."/>
            <person name="Ogasawara N."/>
            <person name="Yasunaga T."/>
            <person name="Kuhara S."/>
            <person name="Shiba T."/>
            <person name="Hattori M."/>
            <person name="Shinagawa H."/>
        </authorList>
    </citation>
    <scope>NUCLEOTIDE SEQUENCE [LARGE SCALE GENOMIC DNA]</scope>
    <source>
        <strain>O157:H7 / Sakai / RIMD 0509952 / EHEC</strain>
    </source>
</reference>